<gene>
    <name evidence="1" type="primary">prfB</name>
    <name type="ordered locus">CTL0719</name>
</gene>
<reference key="1">
    <citation type="journal article" date="2008" name="Genome Res.">
        <title>Chlamydia trachomatis: genome sequence analysis of lymphogranuloma venereum isolates.</title>
        <authorList>
            <person name="Thomson N.R."/>
            <person name="Holden M.T.G."/>
            <person name="Carder C."/>
            <person name="Lennard N."/>
            <person name="Lockey S.J."/>
            <person name="Marsh P."/>
            <person name="Skipp P."/>
            <person name="O'Connor C.D."/>
            <person name="Goodhead I."/>
            <person name="Norbertzcak H."/>
            <person name="Harris B."/>
            <person name="Ormond D."/>
            <person name="Rance R."/>
            <person name="Quail M.A."/>
            <person name="Parkhill J."/>
            <person name="Stephens R.S."/>
            <person name="Clarke I.N."/>
        </authorList>
    </citation>
    <scope>NUCLEOTIDE SEQUENCE [LARGE SCALE GENOMIC DNA]</scope>
    <source>
        <strain>ATCC VR-902B / DSM 19102 / 434/Bu</strain>
    </source>
</reference>
<proteinExistence type="inferred from homology"/>
<name>RF2_CHLT2</name>
<organism>
    <name type="scientific">Chlamydia trachomatis serovar L2 (strain ATCC VR-902B / DSM 19102 / 434/Bu)</name>
    <dbReference type="NCBI Taxonomy" id="471472"/>
    <lineage>
        <taxon>Bacteria</taxon>
        <taxon>Pseudomonadati</taxon>
        <taxon>Chlamydiota</taxon>
        <taxon>Chlamydiia</taxon>
        <taxon>Chlamydiales</taxon>
        <taxon>Chlamydiaceae</taxon>
        <taxon>Chlamydia/Chlamydophila group</taxon>
        <taxon>Chlamydia</taxon>
    </lineage>
</organism>
<comment type="function">
    <text evidence="1">Peptide chain release factor 2 directs the termination of translation in response to the peptide chain termination codons UGA and UAA.</text>
</comment>
<comment type="subcellular location">
    <subcellularLocation>
        <location evidence="1">Cytoplasm</location>
    </subcellularLocation>
</comment>
<comment type="PTM">
    <text evidence="1">Methylated by PrmC. Methylation increases the termination efficiency of RF2.</text>
</comment>
<comment type="similarity">
    <text evidence="1">Belongs to the prokaryotic/mitochondrial release factor family.</text>
</comment>
<sequence length="368" mass="42402">MHENFDKRLEVLLEGLALTRRSLDPEGKENELKELEQQAVQDGFWDDVARAGKISERIARLKQQLSEFNELKNKVSTIQFFLEDEESSKDLEMQKELEKEFVFCEKKITEWETLRLLSGELDRNSCFLSINAGAGGTESCDWVEMVLRMYMRWASSHSWRVEVIDRLDGEVAGIKHITLKLVGEYAYGYAKAESGVHRLVRISPFDSNAKRHTSFASVEVFPEIDDKIEVEIHPGDIRIDTYRSSGAGGQHVNVTDSAVRITHFPTGIVVSCQNERSQIQNREACMNMLRARIYQKLLQERLEKQNIDRKNKKEISWGSQIRNYVFQPYTLVKDVRTGYEVGNIQAMMDGELLDAFIKAYLVDYGEIT</sequence>
<protein>
    <recommendedName>
        <fullName evidence="1">Peptide chain release factor 2</fullName>
        <shortName evidence="1">RF-2</shortName>
    </recommendedName>
</protein>
<keyword id="KW-0963">Cytoplasm</keyword>
<keyword id="KW-0488">Methylation</keyword>
<keyword id="KW-0648">Protein biosynthesis</keyword>
<feature type="chain" id="PRO_1000093536" description="Peptide chain release factor 2">
    <location>
        <begin position="1"/>
        <end position="368"/>
    </location>
</feature>
<feature type="modified residue" description="N5-methylglutamine" evidence="1">
    <location>
        <position position="250"/>
    </location>
</feature>
<evidence type="ECO:0000255" key="1">
    <source>
        <dbReference type="HAMAP-Rule" id="MF_00094"/>
    </source>
</evidence>
<dbReference type="EMBL" id="AM884176">
    <property type="protein sequence ID" value="CAP04158.1"/>
    <property type="molecule type" value="Genomic_DNA"/>
</dbReference>
<dbReference type="RefSeq" id="YP_001654791.1">
    <property type="nucleotide sequence ID" value="NC_010287.1"/>
</dbReference>
<dbReference type="SMR" id="B0B832"/>
<dbReference type="KEGG" id="ctb:CTL0719"/>
<dbReference type="PATRIC" id="fig|471472.4.peg.771"/>
<dbReference type="HOGENOM" id="CLU_221953_0_0_0"/>
<dbReference type="Proteomes" id="UP001154402">
    <property type="component" value="Chromosome"/>
</dbReference>
<dbReference type="GO" id="GO:0005737">
    <property type="term" value="C:cytoplasm"/>
    <property type="evidence" value="ECO:0007669"/>
    <property type="project" value="UniProtKB-SubCell"/>
</dbReference>
<dbReference type="GO" id="GO:0016149">
    <property type="term" value="F:translation release factor activity, codon specific"/>
    <property type="evidence" value="ECO:0007669"/>
    <property type="project" value="UniProtKB-UniRule"/>
</dbReference>
<dbReference type="FunFam" id="3.30.160.20:FF:000004">
    <property type="entry name" value="Peptide chain release factor 1"/>
    <property type="match status" value="1"/>
</dbReference>
<dbReference type="Gene3D" id="3.30.160.20">
    <property type="match status" value="1"/>
</dbReference>
<dbReference type="Gene3D" id="3.30.70.1660">
    <property type="match status" value="1"/>
</dbReference>
<dbReference type="Gene3D" id="1.20.58.410">
    <property type="entry name" value="Release factor"/>
    <property type="match status" value="1"/>
</dbReference>
<dbReference type="HAMAP" id="MF_00094">
    <property type="entry name" value="Rel_fac_2"/>
    <property type="match status" value="1"/>
</dbReference>
<dbReference type="InterPro" id="IPR005139">
    <property type="entry name" value="PCRF"/>
</dbReference>
<dbReference type="InterPro" id="IPR000352">
    <property type="entry name" value="Pep_chain_release_fac_I"/>
</dbReference>
<dbReference type="InterPro" id="IPR045853">
    <property type="entry name" value="Pep_chain_release_fac_I_sf"/>
</dbReference>
<dbReference type="InterPro" id="IPR004374">
    <property type="entry name" value="PrfB"/>
</dbReference>
<dbReference type="NCBIfam" id="TIGR00020">
    <property type="entry name" value="prfB"/>
    <property type="match status" value="1"/>
</dbReference>
<dbReference type="PANTHER" id="PTHR43116:SF3">
    <property type="entry name" value="CLASS I PEPTIDE CHAIN RELEASE FACTOR"/>
    <property type="match status" value="1"/>
</dbReference>
<dbReference type="PANTHER" id="PTHR43116">
    <property type="entry name" value="PEPTIDE CHAIN RELEASE FACTOR 2"/>
    <property type="match status" value="1"/>
</dbReference>
<dbReference type="Pfam" id="PF03462">
    <property type="entry name" value="PCRF"/>
    <property type="match status" value="1"/>
</dbReference>
<dbReference type="Pfam" id="PF00472">
    <property type="entry name" value="RF-1"/>
    <property type="match status" value="1"/>
</dbReference>
<dbReference type="SMART" id="SM00937">
    <property type="entry name" value="PCRF"/>
    <property type="match status" value="1"/>
</dbReference>
<dbReference type="SUPFAM" id="SSF75620">
    <property type="entry name" value="Release factor"/>
    <property type="match status" value="1"/>
</dbReference>
<dbReference type="PROSITE" id="PS00745">
    <property type="entry name" value="RF_PROK_I"/>
    <property type="match status" value="1"/>
</dbReference>
<accession>B0B832</accession>